<gene>
    <name type="primary">ISYNA1</name>
    <name type="synonym">INO1</name>
    <name type="ORF">QtsA-10667</name>
    <name type="ORF">QtsA-18180</name>
</gene>
<evidence type="ECO:0000250" key="1">
    <source>
        <dbReference type="UniProtKB" id="P11986"/>
    </source>
</evidence>
<evidence type="ECO:0000250" key="2">
    <source>
        <dbReference type="UniProtKB" id="Q9NPH2"/>
    </source>
</evidence>
<evidence type="ECO:0000305" key="3"/>
<sequence length="559" mass="61059">MEAAAQFFVESPDVVYGPEAIEAQYEYRTTRVSREGGVLKVHPTSTRFTFRTARQVPRLGVMLVGWGGNNGSTLTAAVLANRLRLSWPTRSGRKEANYYGSLTQAGTVSLGLDAEGQEVFVPFSALLPMVAPNDLVFDGWDISSLNLAEAMRRAKVLDWGLQEQLWPHMEALRPRPSVYIPEFIAANQSARADNLIPGSRAQQLEQIRRDIRDFRSSAGLDKIIVLWTANTERFCEVIPGLNDTAENLLRTIELGLEVSPSTLFAVASILEGCAFLNGSPQNTLVPGALELAWQRRVFVGGDDFKSGQTKVKSVLVDFLIGSGLKTMSIVSYNHLGNNDGENLSAPLQFRSKEVSKSNVVDDMVQSNPVLYAPGEEPDHCVVIKYVPYVGDSKRALDEYTSELMLGGTNTLVLHNTCEDSLLAAPIMLDLALLTELCQRVSFCTDADPEPQTFHPVLSLLSFLFKAPLVPPGSPVVNALFRQRSCIENILRACLGLPPQNHMLLEHKMERPGPVLKRVGPVAAACPVLNKKGPVPAATNGCTGDANGHLQVEEPQMPTT</sequence>
<dbReference type="EC" id="5.5.1.4" evidence="2"/>
<dbReference type="EMBL" id="AB168239">
    <property type="protein sequence ID" value="BAE00364.1"/>
    <property type="molecule type" value="mRNA"/>
</dbReference>
<dbReference type="EMBL" id="AB169241">
    <property type="protein sequence ID" value="BAE01332.1"/>
    <property type="molecule type" value="mRNA"/>
</dbReference>
<dbReference type="RefSeq" id="NP_001270531.1">
    <property type="nucleotide sequence ID" value="NM_001283602.1"/>
</dbReference>
<dbReference type="SMR" id="Q4R6E3"/>
<dbReference type="STRING" id="9541.ENSMFAP00000025553"/>
<dbReference type="eggNOG" id="KOG0693">
    <property type="taxonomic scope" value="Eukaryota"/>
</dbReference>
<dbReference type="UniPathway" id="UPA00823">
    <property type="reaction ID" value="UER00787"/>
</dbReference>
<dbReference type="Proteomes" id="UP000233100">
    <property type="component" value="Unplaced"/>
</dbReference>
<dbReference type="GO" id="GO:0005737">
    <property type="term" value="C:cytoplasm"/>
    <property type="evidence" value="ECO:0007669"/>
    <property type="project" value="UniProtKB-SubCell"/>
</dbReference>
<dbReference type="GO" id="GO:0004512">
    <property type="term" value="F:inositol-3-phosphate synthase activity"/>
    <property type="evidence" value="ECO:0007669"/>
    <property type="project" value="UniProtKB-EC"/>
</dbReference>
<dbReference type="GO" id="GO:0006021">
    <property type="term" value="P:inositol biosynthetic process"/>
    <property type="evidence" value="ECO:0007669"/>
    <property type="project" value="UniProtKB-UniPathway"/>
</dbReference>
<dbReference type="GO" id="GO:0008654">
    <property type="term" value="P:phospholipid biosynthetic process"/>
    <property type="evidence" value="ECO:0007669"/>
    <property type="project" value="UniProtKB-KW"/>
</dbReference>
<dbReference type="FunFam" id="3.40.50.720:FF:000069">
    <property type="entry name" value="Inositol-3-phosphate synthase 1"/>
    <property type="match status" value="1"/>
</dbReference>
<dbReference type="FunFam" id="3.40.50.720:FF:000171">
    <property type="entry name" value="inositol-3-phosphate synthase 1"/>
    <property type="match status" value="1"/>
</dbReference>
<dbReference type="Gene3D" id="3.40.50.720">
    <property type="entry name" value="NAD(P)-binding Rossmann-like Domain"/>
    <property type="match status" value="2"/>
</dbReference>
<dbReference type="InterPro" id="IPR002587">
    <property type="entry name" value="Myo-inos-1-P_Synthase"/>
</dbReference>
<dbReference type="InterPro" id="IPR013021">
    <property type="entry name" value="Myo-inos-1-P_Synthase_GAPDH"/>
</dbReference>
<dbReference type="InterPro" id="IPR036291">
    <property type="entry name" value="NAD(P)-bd_dom_sf"/>
</dbReference>
<dbReference type="PANTHER" id="PTHR11510">
    <property type="entry name" value="MYO-INOSITOL-1 PHOSPHATE SYNTHASE"/>
    <property type="match status" value="1"/>
</dbReference>
<dbReference type="Pfam" id="PF01658">
    <property type="entry name" value="Inos-1-P_synth"/>
    <property type="match status" value="1"/>
</dbReference>
<dbReference type="Pfam" id="PF07994">
    <property type="entry name" value="NAD_binding_5"/>
    <property type="match status" value="1"/>
</dbReference>
<dbReference type="PIRSF" id="PIRSF015578">
    <property type="entry name" value="Myoinos-ppht_syn"/>
    <property type="match status" value="1"/>
</dbReference>
<dbReference type="SUPFAM" id="SSF55347">
    <property type="entry name" value="Glyceraldehyde-3-phosphate dehydrogenase-like, C-terminal domain"/>
    <property type="match status" value="1"/>
</dbReference>
<dbReference type="SUPFAM" id="SSF51735">
    <property type="entry name" value="NAD(P)-binding Rossmann-fold domains"/>
    <property type="match status" value="1"/>
</dbReference>
<accession>Q4R6E3</accession>
<accession>Q4R957</accession>
<protein>
    <recommendedName>
        <fullName>Inositol-3-phosphate synthase 1</fullName>
        <shortName>IPS 1</shortName>
        <ecNumber evidence="2">5.5.1.4</ecNumber>
    </recommendedName>
    <alternativeName>
        <fullName>Myo-inositol 1-phosphate synthase</fullName>
        <shortName>MI-1-P synthase</shortName>
        <shortName>MIP synthase</shortName>
    </alternativeName>
</protein>
<keyword id="KW-0963">Cytoplasm</keyword>
<keyword id="KW-0398">Inositol biosynthesis</keyword>
<keyword id="KW-0413">Isomerase</keyword>
<keyword id="KW-0444">Lipid biosynthesis</keyword>
<keyword id="KW-0443">Lipid metabolism</keyword>
<keyword id="KW-0520">NAD</keyword>
<keyword id="KW-0594">Phospholipid biosynthesis</keyword>
<keyword id="KW-1208">Phospholipid metabolism</keyword>
<keyword id="KW-0597">Phosphoprotein</keyword>
<keyword id="KW-1185">Reference proteome</keyword>
<name>INO1_MACFA</name>
<reference key="1">
    <citation type="submission" date="2005-06" db="EMBL/GenBank/DDBJ databases">
        <title>DNA sequences of macaque genes expressed in brain or testis and its evolutionary implications.</title>
        <authorList>
            <consortium name="International consortium for macaque cDNA sequencing and analysis"/>
        </authorList>
    </citation>
    <scope>NUCLEOTIDE SEQUENCE [LARGE SCALE MRNA]</scope>
    <source>
        <tissue>Testis</tissue>
    </source>
</reference>
<feature type="chain" id="PRO_0000324629" description="Inositol-3-phosphate synthase 1">
    <location>
        <begin position="1"/>
        <end position="559"/>
    </location>
</feature>
<feature type="binding site" evidence="1">
    <location>
        <position position="67"/>
    </location>
    <ligand>
        <name>NAD(+)</name>
        <dbReference type="ChEBI" id="CHEBI:57540"/>
    </ligand>
</feature>
<feature type="binding site" evidence="1">
    <location>
        <position position="68"/>
    </location>
    <ligand>
        <name>NAD(+)</name>
        <dbReference type="ChEBI" id="CHEBI:57540"/>
    </ligand>
</feature>
<feature type="binding site" evidence="1">
    <location>
        <position position="69"/>
    </location>
    <ligand>
        <name>NAD(+)</name>
        <dbReference type="ChEBI" id="CHEBI:57540"/>
    </ligand>
</feature>
<feature type="binding site" evidence="1">
    <location>
        <position position="70"/>
    </location>
    <ligand>
        <name>NAD(+)</name>
        <dbReference type="ChEBI" id="CHEBI:57540"/>
    </ligand>
</feature>
<feature type="binding site" evidence="1">
    <location>
        <position position="141"/>
    </location>
    <ligand>
        <name>NAD(+)</name>
        <dbReference type="ChEBI" id="CHEBI:57540"/>
    </ligand>
</feature>
<feature type="binding site" evidence="1">
    <location>
        <position position="177"/>
    </location>
    <ligand>
        <name>NAD(+)</name>
        <dbReference type="ChEBI" id="CHEBI:57540"/>
    </ligand>
</feature>
<feature type="binding site" evidence="1">
    <location>
        <position position="178"/>
    </location>
    <ligand>
        <name>NAD(+)</name>
        <dbReference type="ChEBI" id="CHEBI:57540"/>
    </ligand>
</feature>
<feature type="binding site" evidence="1">
    <location>
        <position position="188"/>
    </location>
    <ligand>
        <name>NAD(+)</name>
        <dbReference type="ChEBI" id="CHEBI:57540"/>
    </ligand>
</feature>
<feature type="binding site" evidence="1">
    <location>
        <position position="191"/>
    </location>
    <ligand>
        <name>NAD(+)</name>
        <dbReference type="ChEBI" id="CHEBI:57540"/>
    </ligand>
</feature>
<feature type="binding site" evidence="1">
    <location>
        <position position="228"/>
    </location>
    <ligand>
        <name>NAD(+)</name>
        <dbReference type="ChEBI" id="CHEBI:57540"/>
    </ligand>
</feature>
<feature type="binding site" evidence="1">
    <location>
        <position position="229"/>
    </location>
    <ligand>
        <name>NAD(+)</name>
        <dbReference type="ChEBI" id="CHEBI:57540"/>
    </ligand>
</feature>
<feature type="binding site" evidence="1">
    <location>
        <position position="230"/>
    </location>
    <ligand>
        <name>NAD(+)</name>
        <dbReference type="ChEBI" id="CHEBI:57540"/>
    </ligand>
</feature>
<feature type="binding site" evidence="1">
    <location>
        <position position="231"/>
    </location>
    <ligand>
        <name>NAD(+)</name>
        <dbReference type="ChEBI" id="CHEBI:57540"/>
    </ligand>
</feature>
<feature type="binding site" evidence="1">
    <location>
        <position position="278"/>
    </location>
    <ligand>
        <name>NAD(+)</name>
        <dbReference type="ChEBI" id="CHEBI:57540"/>
    </ligand>
</feature>
<feature type="binding site" evidence="1">
    <location>
        <position position="279"/>
    </location>
    <ligand>
        <name>NAD(+)</name>
        <dbReference type="ChEBI" id="CHEBI:57540"/>
    </ligand>
</feature>
<feature type="binding site" evidence="1">
    <location>
        <position position="303"/>
    </location>
    <ligand>
        <name>NAD(+)</name>
        <dbReference type="ChEBI" id="CHEBI:57540"/>
    </ligand>
</feature>
<feature type="binding site" evidence="1">
    <location>
        <position position="306"/>
    </location>
    <ligand>
        <name>NAD(+)</name>
        <dbReference type="ChEBI" id="CHEBI:57540"/>
    </ligand>
</feature>
<feature type="binding site" evidence="1">
    <location>
        <position position="337"/>
    </location>
    <ligand>
        <name>NAD(+)</name>
        <dbReference type="ChEBI" id="CHEBI:57540"/>
    </ligand>
</feature>
<feature type="binding site" evidence="1">
    <location>
        <position position="338"/>
    </location>
    <ligand>
        <name>NAD(+)</name>
        <dbReference type="ChEBI" id="CHEBI:57540"/>
    </ligand>
</feature>
<feature type="binding site" evidence="1">
    <location>
        <position position="339"/>
    </location>
    <ligand>
        <name>NAD(+)</name>
        <dbReference type="ChEBI" id="CHEBI:57540"/>
    </ligand>
</feature>
<feature type="binding site" evidence="1">
    <location>
        <position position="352"/>
    </location>
    <ligand>
        <name>NAD(+)</name>
        <dbReference type="ChEBI" id="CHEBI:57540"/>
    </ligand>
</feature>
<feature type="binding site" evidence="1">
    <location>
        <position position="390"/>
    </location>
    <ligand>
        <name>NAD(+)</name>
        <dbReference type="ChEBI" id="CHEBI:57540"/>
    </ligand>
</feature>
<feature type="binding site" evidence="1">
    <location>
        <position position="391"/>
    </location>
    <ligand>
        <name>NAD(+)</name>
        <dbReference type="ChEBI" id="CHEBI:57540"/>
    </ligand>
</feature>
<feature type="binding site" evidence="1">
    <location>
        <position position="419"/>
    </location>
    <ligand>
        <name>NAD(+)</name>
        <dbReference type="ChEBI" id="CHEBI:57540"/>
    </ligand>
</feature>
<feature type="binding site" evidence="1">
    <location>
        <position position="420"/>
    </location>
    <ligand>
        <name>NAD(+)</name>
        <dbReference type="ChEBI" id="CHEBI:57540"/>
    </ligand>
</feature>
<feature type="modified residue" description="Phosphoserine" evidence="2">
    <location>
        <position position="279"/>
    </location>
</feature>
<feature type="modified residue" description="Phosphoserine" evidence="2">
    <location>
        <position position="357"/>
    </location>
</feature>
<feature type="sequence conflict" description="In Ref. 1; BAE00364." evidence="3" ref="1">
    <original>L</original>
    <variation>P</variation>
    <location>
        <position position="428"/>
    </location>
</feature>
<organism>
    <name type="scientific">Macaca fascicularis</name>
    <name type="common">Crab-eating macaque</name>
    <name type="synonym">Cynomolgus monkey</name>
    <dbReference type="NCBI Taxonomy" id="9541"/>
    <lineage>
        <taxon>Eukaryota</taxon>
        <taxon>Metazoa</taxon>
        <taxon>Chordata</taxon>
        <taxon>Craniata</taxon>
        <taxon>Vertebrata</taxon>
        <taxon>Euteleostomi</taxon>
        <taxon>Mammalia</taxon>
        <taxon>Eutheria</taxon>
        <taxon>Euarchontoglires</taxon>
        <taxon>Primates</taxon>
        <taxon>Haplorrhini</taxon>
        <taxon>Catarrhini</taxon>
        <taxon>Cercopithecidae</taxon>
        <taxon>Cercopithecinae</taxon>
        <taxon>Macaca</taxon>
    </lineage>
</organism>
<comment type="function">
    <text evidence="2">Key enzyme in myo-inositol biosynthesis pathway that catalyzes the conversion of glucose 6-phosphate to 1-myo-inositol 1-phosphate in a NAD-dependent manner. Rate-limiting enzyme in the synthesis of all inositol-containing compounds (By similarity).</text>
</comment>
<comment type="catalytic activity">
    <reaction evidence="2">
        <text>D-glucose 6-phosphate = 1D-myo-inositol 3-phosphate</text>
        <dbReference type="Rhea" id="RHEA:10716"/>
        <dbReference type="ChEBI" id="CHEBI:58401"/>
        <dbReference type="ChEBI" id="CHEBI:61548"/>
        <dbReference type="EC" id="5.5.1.4"/>
    </reaction>
</comment>
<comment type="cofactor">
    <cofactor evidence="2">
        <name>NAD(+)</name>
        <dbReference type="ChEBI" id="CHEBI:57540"/>
    </cofactor>
</comment>
<comment type="pathway">
    <text>Polyol metabolism; myo-inositol biosynthesis; myo-inositol from D-glucose 6-phosphate: step 1/2.</text>
</comment>
<comment type="subcellular location">
    <subcellularLocation>
        <location evidence="1">Cytoplasm</location>
    </subcellularLocation>
</comment>
<comment type="similarity">
    <text evidence="3">Belongs to the myo-inositol 1-phosphate synthase family.</text>
</comment>
<proteinExistence type="evidence at transcript level"/>